<protein>
    <recommendedName>
        <fullName evidence="1">Ribosome maturation factor RimM</fullName>
    </recommendedName>
</protein>
<reference key="1">
    <citation type="journal article" date="2005" name="Proc. Natl. Acad. Sci. U.S.A.">
        <title>Complete genome sequence of Vibrio fischeri: a symbiotic bacterium with pathogenic congeners.</title>
        <authorList>
            <person name="Ruby E.G."/>
            <person name="Urbanowski M."/>
            <person name="Campbell J."/>
            <person name="Dunn A."/>
            <person name="Faini M."/>
            <person name="Gunsalus R."/>
            <person name="Lostroh P."/>
            <person name="Lupp C."/>
            <person name="McCann J."/>
            <person name="Millikan D."/>
            <person name="Schaefer A."/>
            <person name="Stabb E."/>
            <person name="Stevens A."/>
            <person name="Visick K."/>
            <person name="Whistler C."/>
            <person name="Greenberg E.P."/>
        </authorList>
    </citation>
    <scope>NUCLEOTIDE SEQUENCE [LARGE SCALE GENOMIC DNA]</scope>
    <source>
        <strain>ATCC 700601 / ES114</strain>
    </source>
</reference>
<evidence type="ECO:0000255" key="1">
    <source>
        <dbReference type="HAMAP-Rule" id="MF_00014"/>
    </source>
</evidence>
<comment type="function">
    <text evidence="1">An accessory protein needed during the final step in the assembly of 30S ribosomal subunit, possibly for assembly of the head region. Essential for efficient processing of 16S rRNA. May be needed both before and after RbfA during the maturation of 16S rRNA. It has affinity for free ribosomal 30S subunits but not for 70S ribosomes.</text>
</comment>
<comment type="subunit">
    <text evidence="1">Binds ribosomal protein uS19.</text>
</comment>
<comment type="subcellular location">
    <subcellularLocation>
        <location evidence="1">Cytoplasm</location>
    </subcellularLocation>
</comment>
<comment type="domain">
    <text evidence="1">The PRC barrel domain binds ribosomal protein uS19.</text>
</comment>
<comment type="similarity">
    <text evidence="1">Belongs to the RimM family.</text>
</comment>
<proteinExistence type="inferred from homology"/>
<feature type="chain" id="PRO_0000244186" description="Ribosome maturation factor RimM">
    <location>
        <begin position="1"/>
        <end position="175"/>
    </location>
</feature>
<feature type="domain" description="PRC barrel" evidence="1">
    <location>
        <begin position="96"/>
        <end position="175"/>
    </location>
</feature>
<gene>
    <name evidence="1" type="primary">rimM</name>
    <name type="ordered locus">VF_0550</name>
</gene>
<sequence>MSKQDEVIVVGKFGASYGIRGWLKVVSFTDQPESIFDYKPWLIQVKGEWVEFSVESWKRHKGLVCKLKGLDVREEAQTYTNLEIAVKADALPELSEDEFYWRELFGMEVVTTKGYALGVVDDIFETGSNDVLVVKANLKDAFGKKERLIPFIDEQVIKLIDREAQRIEVDWDPGF</sequence>
<accession>Q5E7F1</accession>
<keyword id="KW-0143">Chaperone</keyword>
<keyword id="KW-0963">Cytoplasm</keyword>
<keyword id="KW-1185">Reference proteome</keyword>
<keyword id="KW-0690">Ribosome biogenesis</keyword>
<keyword id="KW-0698">rRNA processing</keyword>
<name>RIMM_ALIF1</name>
<organism>
    <name type="scientific">Aliivibrio fischeri (strain ATCC 700601 / ES114)</name>
    <name type="common">Vibrio fischeri</name>
    <dbReference type="NCBI Taxonomy" id="312309"/>
    <lineage>
        <taxon>Bacteria</taxon>
        <taxon>Pseudomonadati</taxon>
        <taxon>Pseudomonadota</taxon>
        <taxon>Gammaproteobacteria</taxon>
        <taxon>Vibrionales</taxon>
        <taxon>Vibrionaceae</taxon>
        <taxon>Aliivibrio</taxon>
    </lineage>
</organism>
<dbReference type="EMBL" id="CP000020">
    <property type="protein sequence ID" value="AAW85045.1"/>
    <property type="molecule type" value="Genomic_DNA"/>
</dbReference>
<dbReference type="RefSeq" id="WP_011261312.1">
    <property type="nucleotide sequence ID" value="NC_006840.2"/>
</dbReference>
<dbReference type="RefSeq" id="YP_203933.1">
    <property type="nucleotide sequence ID" value="NC_006840.2"/>
</dbReference>
<dbReference type="SMR" id="Q5E7F1"/>
<dbReference type="STRING" id="312309.VF_0550"/>
<dbReference type="DNASU" id="3278232"/>
<dbReference type="EnsemblBacteria" id="AAW85045">
    <property type="protein sequence ID" value="AAW85045"/>
    <property type="gene ID" value="VF_0550"/>
</dbReference>
<dbReference type="GeneID" id="54163199"/>
<dbReference type="KEGG" id="vfi:VF_0550"/>
<dbReference type="PATRIC" id="fig|312309.11.peg.543"/>
<dbReference type="eggNOG" id="COG0806">
    <property type="taxonomic scope" value="Bacteria"/>
</dbReference>
<dbReference type="HOGENOM" id="CLU_077636_1_0_6"/>
<dbReference type="OrthoDB" id="9783509at2"/>
<dbReference type="Proteomes" id="UP000000537">
    <property type="component" value="Chromosome I"/>
</dbReference>
<dbReference type="GO" id="GO:0005737">
    <property type="term" value="C:cytoplasm"/>
    <property type="evidence" value="ECO:0007669"/>
    <property type="project" value="UniProtKB-SubCell"/>
</dbReference>
<dbReference type="GO" id="GO:0005840">
    <property type="term" value="C:ribosome"/>
    <property type="evidence" value="ECO:0007669"/>
    <property type="project" value="InterPro"/>
</dbReference>
<dbReference type="GO" id="GO:0043022">
    <property type="term" value="F:ribosome binding"/>
    <property type="evidence" value="ECO:0007669"/>
    <property type="project" value="InterPro"/>
</dbReference>
<dbReference type="GO" id="GO:0042274">
    <property type="term" value="P:ribosomal small subunit biogenesis"/>
    <property type="evidence" value="ECO:0007669"/>
    <property type="project" value="UniProtKB-UniRule"/>
</dbReference>
<dbReference type="GO" id="GO:0006364">
    <property type="term" value="P:rRNA processing"/>
    <property type="evidence" value="ECO:0007669"/>
    <property type="project" value="UniProtKB-UniRule"/>
</dbReference>
<dbReference type="Gene3D" id="2.30.30.240">
    <property type="entry name" value="PRC-barrel domain"/>
    <property type="match status" value="1"/>
</dbReference>
<dbReference type="Gene3D" id="2.40.30.60">
    <property type="entry name" value="RimM"/>
    <property type="match status" value="1"/>
</dbReference>
<dbReference type="HAMAP" id="MF_00014">
    <property type="entry name" value="Ribosome_mat_RimM"/>
    <property type="match status" value="1"/>
</dbReference>
<dbReference type="InterPro" id="IPR027275">
    <property type="entry name" value="PRC-brl_dom"/>
</dbReference>
<dbReference type="InterPro" id="IPR011033">
    <property type="entry name" value="PRC_barrel-like_sf"/>
</dbReference>
<dbReference type="InterPro" id="IPR011961">
    <property type="entry name" value="RimM"/>
</dbReference>
<dbReference type="InterPro" id="IPR002676">
    <property type="entry name" value="RimM_N"/>
</dbReference>
<dbReference type="InterPro" id="IPR036976">
    <property type="entry name" value="RimM_N_sf"/>
</dbReference>
<dbReference type="InterPro" id="IPR009000">
    <property type="entry name" value="Transl_B-barrel_sf"/>
</dbReference>
<dbReference type="NCBIfam" id="TIGR02273">
    <property type="entry name" value="16S_RimM"/>
    <property type="match status" value="1"/>
</dbReference>
<dbReference type="PANTHER" id="PTHR33692">
    <property type="entry name" value="RIBOSOME MATURATION FACTOR RIMM"/>
    <property type="match status" value="1"/>
</dbReference>
<dbReference type="PANTHER" id="PTHR33692:SF1">
    <property type="entry name" value="RIBOSOME MATURATION FACTOR RIMM"/>
    <property type="match status" value="1"/>
</dbReference>
<dbReference type="Pfam" id="PF05239">
    <property type="entry name" value="PRC"/>
    <property type="match status" value="1"/>
</dbReference>
<dbReference type="Pfam" id="PF01782">
    <property type="entry name" value="RimM"/>
    <property type="match status" value="1"/>
</dbReference>
<dbReference type="SUPFAM" id="SSF50346">
    <property type="entry name" value="PRC-barrel domain"/>
    <property type="match status" value="1"/>
</dbReference>
<dbReference type="SUPFAM" id="SSF50447">
    <property type="entry name" value="Translation proteins"/>
    <property type="match status" value="1"/>
</dbReference>